<keyword id="KW-0227">DNA damage</keyword>
<keyword id="KW-0234">DNA repair</keyword>
<keyword id="KW-0235">DNA replication</keyword>
<keyword id="KW-0436">Ligase</keyword>
<keyword id="KW-0460">Magnesium</keyword>
<keyword id="KW-0464">Manganese</keyword>
<keyword id="KW-0479">Metal-binding</keyword>
<keyword id="KW-0520">NAD</keyword>
<keyword id="KW-0862">Zinc</keyword>
<accession>B0KPX3</accession>
<gene>
    <name evidence="1" type="primary">ligA</name>
    <name type="ordered locus">PputGB1_3838</name>
</gene>
<sequence length="776" mass="84263">MTAETRIHELRAELDQHNYRYYVLDEPSVPDAEYDRLFNELKALEAEHPHLVTPDSPTQRVGGEALSAFSQVRHEVPMLSLGNAFEETDLREFGRRVVEGLDQPGAVDYSCKPKLDGLAVSLLYRDGQLVQGATRGDGTTGEDISANVRTVRNIPLKLQGEGWPAVLEVRGEVYMSKAGFDRLNAAQAEAGGKTFANPRNAAAGSLRQLDSKITASRPLEFCCYGVGQVSESIGDSHIGVLEQLKAWGMPISRELRHAAGIEECLAYYRDIGERRNSLPYEIDGVVFKVNNLAAQRELGFRAREPRWAIAHKFPAMEELTEVLDVEFQVGRTGAVTPVARLKPVKVAGVTVSNATLHNMDEIARLGLRIGDTVIIRRAGDVIPQVMQVVLERRPDDARPVEVPSACPVCGSQVERTQLVKRSKGKETTSEGAVYRCVGRLACGAQLKQAIIHYVSRRAMDIDGLGEKSVEQLVDEGLIGSPADLYKLAFEQIVGLEGFAEVSSKKLLDAIEASKRPSLARFIYALGIPDVGEETAKVLARSLGSLARVQQALPQVLTYLPDIGLEVAYEIHNFFEDEHNQKVIEQLLASGMKLQDEGELAAEFAASTTLAGMIAKLDIASVGPTGAEKLVAKLDSLEKIIAADGIDLRQALAAKQADAVREFFKDEANQKLARDIEAQLLAFGMHWSCEKKVAEGLPLAGQTWVLTGTLERMSRDIAKDKLESLGAKVAGSVSGKTHCVVAGPGAGSKLAKASELGVKVLDEDAFVTFLAEQGIVV</sequence>
<organism>
    <name type="scientific">Pseudomonas putida (strain GB-1)</name>
    <dbReference type="NCBI Taxonomy" id="76869"/>
    <lineage>
        <taxon>Bacteria</taxon>
        <taxon>Pseudomonadati</taxon>
        <taxon>Pseudomonadota</taxon>
        <taxon>Gammaproteobacteria</taxon>
        <taxon>Pseudomonadales</taxon>
        <taxon>Pseudomonadaceae</taxon>
        <taxon>Pseudomonas</taxon>
    </lineage>
</organism>
<proteinExistence type="inferred from homology"/>
<dbReference type="EC" id="6.5.1.2" evidence="1"/>
<dbReference type="EMBL" id="CP000926">
    <property type="protein sequence ID" value="ABY99728.1"/>
    <property type="molecule type" value="Genomic_DNA"/>
</dbReference>
<dbReference type="RefSeq" id="WP_012273422.1">
    <property type="nucleotide sequence ID" value="NC_010322.1"/>
</dbReference>
<dbReference type="SMR" id="B0KPX3"/>
<dbReference type="KEGG" id="ppg:PputGB1_3838"/>
<dbReference type="eggNOG" id="COG0272">
    <property type="taxonomic scope" value="Bacteria"/>
</dbReference>
<dbReference type="HOGENOM" id="CLU_007764_2_1_6"/>
<dbReference type="Proteomes" id="UP000002157">
    <property type="component" value="Chromosome"/>
</dbReference>
<dbReference type="GO" id="GO:0005829">
    <property type="term" value="C:cytosol"/>
    <property type="evidence" value="ECO:0007669"/>
    <property type="project" value="TreeGrafter"/>
</dbReference>
<dbReference type="GO" id="GO:0003677">
    <property type="term" value="F:DNA binding"/>
    <property type="evidence" value="ECO:0007669"/>
    <property type="project" value="InterPro"/>
</dbReference>
<dbReference type="GO" id="GO:0003911">
    <property type="term" value="F:DNA ligase (NAD+) activity"/>
    <property type="evidence" value="ECO:0007669"/>
    <property type="project" value="UniProtKB-UniRule"/>
</dbReference>
<dbReference type="GO" id="GO:0046872">
    <property type="term" value="F:metal ion binding"/>
    <property type="evidence" value="ECO:0007669"/>
    <property type="project" value="UniProtKB-KW"/>
</dbReference>
<dbReference type="GO" id="GO:0006281">
    <property type="term" value="P:DNA repair"/>
    <property type="evidence" value="ECO:0007669"/>
    <property type="project" value="UniProtKB-KW"/>
</dbReference>
<dbReference type="GO" id="GO:0006260">
    <property type="term" value="P:DNA replication"/>
    <property type="evidence" value="ECO:0007669"/>
    <property type="project" value="UniProtKB-KW"/>
</dbReference>
<dbReference type="CDD" id="cd17748">
    <property type="entry name" value="BRCT_DNA_ligase_like"/>
    <property type="match status" value="1"/>
</dbReference>
<dbReference type="CDD" id="cd00114">
    <property type="entry name" value="LIGANc"/>
    <property type="match status" value="1"/>
</dbReference>
<dbReference type="FunFam" id="1.10.150.20:FF:000006">
    <property type="entry name" value="DNA ligase"/>
    <property type="match status" value="1"/>
</dbReference>
<dbReference type="FunFam" id="1.10.150.20:FF:000007">
    <property type="entry name" value="DNA ligase"/>
    <property type="match status" value="1"/>
</dbReference>
<dbReference type="FunFam" id="1.10.287.610:FF:000002">
    <property type="entry name" value="DNA ligase"/>
    <property type="match status" value="1"/>
</dbReference>
<dbReference type="FunFam" id="2.40.50.140:FF:000012">
    <property type="entry name" value="DNA ligase"/>
    <property type="match status" value="1"/>
</dbReference>
<dbReference type="FunFam" id="3.30.470.30:FF:000001">
    <property type="entry name" value="DNA ligase"/>
    <property type="match status" value="1"/>
</dbReference>
<dbReference type="Gene3D" id="6.20.10.30">
    <property type="match status" value="1"/>
</dbReference>
<dbReference type="Gene3D" id="1.10.150.20">
    <property type="entry name" value="5' to 3' exonuclease, C-terminal subdomain"/>
    <property type="match status" value="3"/>
</dbReference>
<dbReference type="Gene3D" id="3.40.50.10190">
    <property type="entry name" value="BRCT domain"/>
    <property type="match status" value="1"/>
</dbReference>
<dbReference type="Gene3D" id="3.30.470.30">
    <property type="entry name" value="DNA ligase/mRNA capping enzyme"/>
    <property type="match status" value="1"/>
</dbReference>
<dbReference type="Gene3D" id="1.10.287.610">
    <property type="entry name" value="Helix hairpin bin"/>
    <property type="match status" value="1"/>
</dbReference>
<dbReference type="Gene3D" id="2.40.50.140">
    <property type="entry name" value="Nucleic acid-binding proteins"/>
    <property type="match status" value="1"/>
</dbReference>
<dbReference type="HAMAP" id="MF_01588">
    <property type="entry name" value="DNA_ligase_A"/>
    <property type="match status" value="1"/>
</dbReference>
<dbReference type="InterPro" id="IPR001357">
    <property type="entry name" value="BRCT_dom"/>
</dbReference>
<dbReference type="InterPro" id="IPR036420">
    <property type="entry name" value="BRCT_dom_sf"/>
</dbReference>
<dbReference type="InterPro" id="IPR041663">
    <property type="entry name" value="DisA/LigA_HHH"/>
</dbReference>
<dbReference type="InterPro" id="IPR001679">
    <property type="entry name" value="DNA_ligase"/>
</dbReference>
<dbReference type="InterPro" id="IPR018239">
    <property type="entry name" value="DNA_ligase_AS"/>
</dbReference>
<dbReference type="InterPro" id="IPR033136">
    <property type="entry name" value="DNA_ligase_CS"/>
</dbReference>
<dbReference type="InterPro" id="IPR013839">
    <property type="entry name" value="DNAligase_adenylation"/>
</dbReference>
<dbReference type="InterPro" id="IPR013840">
    <property type="entry name" value="DNAligase_N"/>
</dbReference>
<dbReference type="InterPro" id="IPR003583">
    <property type="entry name" value="Hlx-hairpin-Hlx_DNA-bd_motif"/>
</dbReference>
<dbReference type="InterPro" id="IPR012340">
    <property type="entry name" value="NA-bd_OB-fold"/>
</dbReference>
<dbReference type="InterPro" id="IPR004150">
    <property type="entry name" value="NAD_DNA_ligase_OB"/>
</dbReference>
<dbReference type="InterPro" id="IPR010994">
    <property type="entry name" value="RuvA_2-like"/>
</dbReference>
<dbReference type="NCBIfam" id="TIGR00575">
    <property type="entry name" value="dnlj"/>
    <property type="match status" value="1"/>
</dbReference>
<dbReference type="NCBIfam" id="NF005932">
    <property type="entry name" value="PRK07956.1"/>
    <property type="match status" value="1"/>
</dbReference>
<dbReference type="PANTHER" id="PTHR23389">
    <property type="entry name" value="CHROMOSOME TRANSMISSION FIDELITY FACTOR 18"/>
    <property type="match status" value="1"/>
</dbReference>
<dbReference type="PANTHER" id="PTHR23389:SF9">
    <property type="entry name" value="DNA LIGASE"/>
    <property type="match status" value="1"/>
</dbReference>
<dbReference type="Pfam" id="PF00533">
    <property type="entry name" value="BRCT"/>
    <property type="match status" value="1"/>
</dbReference>
<dbReference type="Pfam" id="PF01653">
    <property type="entry name" value="DNA_ligase_aden"/>
    <property type="match status" value="1"/>
</dbReference>
<dbReference type="Pfam" id="PF03120">
    <property type="entry name" value="DNA_ligase_OB"/>
    <property type="match status" value="1"/>
</dbReference>
<dbReference type="Pfam" id="PF12826">
    <property type="entry name" value="HHH_2"/>
    <property type="match status" value="1"/>
</dbReference>
<dbReference type="Pfam" id="PF14520">
    <property type="entry name" value="HHH_5"/>
    <property type="match status" value="1"/>
</dbReference>
<dbReference type="Pfam" id="PF22745">
    <property type="entry name" value="Nlig-Ia"/>
    <property type="match status" value="1"/>
</dbReference>
<dbReference type="PIRSF" id="PIRSF001604">
    <property type="entry name" value="LigA"/>
    <property type="match status" value="1"/>
</dbReference>
<dbReference type="SMART" id="SM00292">
    <property type="entry name" value="BRCT"/>
    <property type="match status" value="1"/>
</dbReference>
<dbReference type="SMART" id="SM00278">
    <property type="entry name" value="HhH1"/>
    <property type="match status" value="3"/>
</dbReference>
<dbReference type="SMART" id="SM00532">
    <property type="entry name" value="LIGANc"/>
    <property type="match status" value="1"/>
</dbReference>
<dbReference type="SUPFAM" id="SSF52113">
    <property type="entry name" value="BRCT domain"/>
    <property type="match status" value="1"/>
</dbReference>
<dbReference type="SUPFAM" id="SSF56091">
    <property type="entry name" value="DNA ligase/mRNA capping enzyme, catalytic domain"/>
    <property type="match status" value="1"/>
</dbReference>
<dbReference type="SUPFAM" id="SSF50249">
    <property type="entry name" value="Nucleic acid-binding proteins"/>
    <property type="match status" value="1"/>
</dbReference>
<dbReference type="SUPFAM" id="SSF47781">
    <property type="entry name" value="RuvA domain 2-like"/>
    <property type="match status" value="2"/>
</dbReference>
<dbReference type="PROSITE" id="PS50172">
    <property type="entry name" value="BRCT"/>
    <property type="match status" value="1"/>
</dbReference>
<dbReference type="PROSITE" id="PS01055">
    <property type="entry name" value="DNA_LIGASE_N1"/>
    <property type="match status" value="1"/>
</dbReference>
<dbReference type="PROSITE" id="PS01056">
    <property type="entry name" value="DNA_LIGASE_N2"/>
    <property type="match status" value="1"/>
</dbReference>
<protein>
    <recommendedName>
        <fullName evidence="1">DNA ligase</fullName>
        <ecNumber evidence="1">6.5.1.2</ecNumber>
    </recommendedName>
    <alternativeName>
        <fullName evidence="1">Polydeoxyribonucleotide synthase [NAD(+)]</fullName>
    </alternativeName>
</protein>
<comment type="function">
    <text evidence="1">DNA ligase that catalyzes the formation of phosphodiester linkages between 5'-phosphoryl and 3'-hydroxyl groups in double-stranded DNA using NAD as a coenzyme and as the energy source for the reaction. It is essential for DNA replication and repair of damaged DNA.</text>
</comment>
<comment type="catalytic activity">
    <reaction evidence="1">
        <text>NAD(+) + (deoxyribonucleotide)n-3'-hydroxyl + 5'-phospho-(deoxyribonucleotide)m = (deoxyribonucleotide)n+m + AMP + beta-nicotinamide D-nucleotide.</text>
        <dbReference type="EC" id="6.5.1.2"/>
    </reaction>
</comment>
<comment type="cofactor">
    <cofactor evidence="1">
        <name>Mg(2+)</name>
        <dbReference type="ChEBI" id="CHEBI:18420"/>
    </cofactor>
    <cofactor evidence="1">
        <name>Mn(2+)</name>
        <dbReference type="ChEBI" id="CHEBI:29035"/>
    </cofactor>
</comment>
<comment type="similarity">
    <text evidence="1">Belongs to the NAD-dependent DNA ligase family. LigA subfamily.</text>
</comment>
<reference key="1">
    <citation type="submission" date="2008-01" db="EMBL/GenBank/DDBJ databases">
        <title>Complete sequence of Pseudomonas putida GB-1.</title>
        <authorList>
            <consortium name="US DOE Joint Genome Institute"/>
            <person name="Copeland A."/>
            <person name="Lucas S."/>
            <person name="Lapidus A."/>
            <person name="Barry K."/>
            <person name="Glavina del Rio T."/>
            <person name="Dalin E."/>
            <person name="Tice H."/>
            <person name="Pitluck S."/>
            <person name="Bruce D."/>
            <person name="Goodwin L."/>
            <person name="Chertkov O."/>
            <person name="Brettin T."/>
            <person name="Detter J.C."/>
            <person name="Han C."/>
            <person name="Kuske C.R."/>
            <person name="Schmutz J."/>
            <person name="Larimer F."/>
            <person name="Land M."/>
            <person name="Hauser L."/>
            <person name="Kyrpides N."/>
            <person name="Kim E."/>
            <person name="McCarthy J.K."/>
            <person name="Richardson P."/>
        </authorList>
    </citation>
    <scope>NUCLEOTIDE SEQUENCE [LARGE SCALE GENOMIC DNA]</scope>
    <source>
        <strain>GB-1</strain>
    </source>
</reference>
<name>DNLJ_PSEPG</name>
<evidence type="ECO:0000255" key="1">
    <source>
        <dbReference type="HAMAP-Rule" id="MF_01588"/>
    </source>
</evidence>
<feature type="chain" id="PRO_0000340370" description="DNA ligase">
    <location>
        <begin position="1"/>
        <end position="776"/>
    </location>
</feature>
<feature type="domain" description="BRCT" evidence="1">
    <location>
        <begin position="693"/>
        <end position="776"/>
    </location>
</feature>
<feature type="active site" description="N6-AMP-lysine intermediate" evidence="1">
    <location>
        <position position="114"/>
    </location>
</feature>
<feature type="binding site" evidence="1">
    <location>
        <begin position="31"/>
        <end position="35"/>
    </location>
    <ligand>
        <name>NAD(+)</name>
        <dbReference type="ChEBI" id="CHEBI:57540"/>
    </ligand>
</feature>
<feature type="binding site" evidence="1">
    <location>
        <begin position="80"/>
        <end position="81"/>
    </location>
    <ligand>
        <name>NAD(+)</name>
        <dbReference type="ChEBI" id="CHEBI:57540"/>
    </ligand>
</feature>
<feature type="binding site" evidence="1">
    <location>
        <position position="135"/>
    </location>
    <ligand>
        <name>NAD(+)</name>
        <dbReference type="ChEBI" id="CHEBI:57540"/>
    </ligand>
</feature>
<feature type="binding site" evidence="1">
    <location>
        <position position="172"/>
    </location>
    <ligand>
        <name>NAD(+)</name>
        <dbReference type="ChEBI" id="CHEBI:57540"/>
    </ligand>
</feature>
<feature type="binding site" evidence="1">
    <location>
        <position position="288"/>
    </location>
    <ligand>
        <name>NAD(+)</name>
        <dbReference type="ChEBI" id="CHEBI:57540"/>
    </ligand>
</feature>
<feature type="binding site" evidence="1">
    <location>
        <position position="312"/>
    </location>
    <ligand>
        <name>NAD(+)</name>
        <dbReference type="ChEBI" id="CHEBI:57540"/>
    </ligand>
</feature>
<feature type="binding site" evidence="1">
    <location>
        <position position="406"/>
    </location>
    <ligand>
        <name>Zn(2+)</name>
        <dbReference type="ChEBI" id="CHEBI:29105"/>
    </ligand>
</feature>
<feature type="binding site" evidence="1">
    <location>
        <position position="409"/>
    </location>
    <ligand>
        <name>Zn(2+)</name>
        <dbReference type="ChEBI" id="CHEBI:29105"/>
    </ligand>
</feature>
<feature type="binding site" evidence="1">
    <location>
        <position position="436"/>
    </location>
    <ligand>
        <name>Zn(2+)</name>
        <dbReference type="ChEBI" id="CHEBI:29105"/>
    </ligand>
</feature>
<feature type="binding site" evidence="1">
    <location>
        <position position="442"/>
    </location>
    <ligand>
        <name>Zn(2+)</name>
        <dbReference type="ChEBI" id="CHEBI:29105"/>
    </ligand>
</feature>